<feature type="chain" id="PRO_1000165064" description="Glycogen debranching enzyme">
    <location>
        <begin position="1"/>
        <end position="661"/>
    </location>
</feature>
<feature type="region of interest" description="Disordered" evidence="2">
    <location>
        <begin position="460"/>
        <end position="481"/>
    </location>
</feature>
<feature type="active site" description="Nucleophile" evidence="1">
    <location>
        <position position="338"/>
    </location>
</feature>
<feature type="active site" description="Proton donor" evidence="1">
    <location>
        <position position="373"/>
    </location>
</feature>
<feature type="site" description="Transition state stabilizer" evidence="1">
    <location>
        <position position="445"/>
    </location>
</feature>
<sequence>MTELTPGIAAPLGAYYDGNGINFSLYSAHATGVELCLFDEQQREVRLPLATRSGDIWHGYLPGGKPGQRYGYRVHGPFDPAQGLRFNPNKLLLDPAARAVEGPVADDPYLHGGYDRPDRHDSAELMPKCVVIDEAYDWQDDCPPATPWGKTVIYEAHVRGLTLQHPEIPQVLRGSFAALGHPVMIAYFKRLGITALELLPVQQHSSEPRLQRLGLINYWGYNVLAPYAPDNRYSSLRTDMTPLREFRDAVKALHKAGIEVILDVVFNHSAELDTDGPTLSLRGIDNPGYYWLTPDGGYVNDTGCGNTLRLDQPQGVAWVMDCLRFWVGECHVDGFRFDLGSVLGRTPAFDRDAPLFQAMLADDLLSRCKLIAEPWDIGPGGYQVGEFPGRFAEWNDHYRDDMRRFWLQGDISLGQFAQRFAASSDLFNQRGRAPYASINMLTAHDGFTLQDLVSFSRKHNQLNGEGNRDGSDRNFSNNHGVEGPIADDAIVQRRRASRQALLATLLLSQGTPMLLAGDEHGHSQQGNNNAYCQDNAITWLDWATADDSLTAYTAALIHLRQQIPALQHDRWWQEGDGNVQWLNAQGQSLSAQQWEQGDLQLQICLSQRWLVVVNATQQAVEMTLPAGDWQLVAPFTQEDSRAVLPAWNQAAHSICVLVKKK</sequence>
<name>GLGX_SERP5</name>
<proteinExistence type="inferred from homology"/>
<dbReference type="EC" id="3.2.1.196" evidence="1"/>
<dbReference type="EMBL" id="CP000826">
    <property type="protein sequence ID" value="ABV43739.1"/>
    <property type="molecule type" value="Genomic_DNA"/>
</dbReference>
<dbReference type="SMR" id="A8GKU9"/>
<dbReference type="STRING" id="399741.Spro_4646"/>
<dbReference type="CAZy" id="CBM48">
    <property type="family name" value="Carbohydrate-Binding Module Family 48"/>
</dbReference>
<dbReference type="CAZy" id="GH13">
    <property type="family name" value="Glycoside Hydrolase Family 13"/>
</dbReference>
<dbReference type="KEGG" id="spe:Spro_4646"/>
<dbReference type="eggNOG" id="COG1523">
    <property type="taxonomic scope" value="Bacteria"/>
</dbReference>
<dbReference type="HOGENOM" id="CLU_011725_1_1_6"/>
<dbReference type="OrthoDB" id="3236218at2"/>
<dbReference type="UniPathway" id="UPA00165"/>
<dbReference type="GO" id="GO:0004133">
    <property type="term" value="F:glycogen debranching enzyme activity"/>
    <property type="evidence" value="ECO:0007669"/>
    <property type="project" value="UniProtKB-UniRule"/>
</dbReference>
<dbReference type="GO" id="GO:0004553">
    <property type="term" value="F:hydrolase activity, hydrolyzing O-glycosyl compounds"/>
    <property type="evidence" value="ECO:0007669"/>
    <property type="project" value="InterPro"/>
</dbReference>
<dbReference type="GO" id="GO:0005980">
    <property type="term" value="P:glycogen catabolic process"/>
    <property type="evidence" value="ECO:0007669"/>
    <property type="project" value="UniProtKB-UniRule"/>
</dbReference>
<dbReference type="CDD" id="cd11326">
    <property type="entry name" value="AmyAc_Glg_debranch"/>
    <property type="match status" value="1"/>
</dbReference>
<dbReference type="CDD" id="cd02856">
    <property type="entry name" value="E_set_GDE_Isoamylase_N"/>
    <property type="match status" value="1"/>
</dbReference>
<dbReference type="Gene3D" id="3.20.20.80">
    <property type="entry name" value="Glycosidases"/>
    <property type="match status" value="1"/>
</dbReference>
<dbReference type="Gene3D" id="2.60.40.1180">
    <property type="entry name" value="Golgi alpha-mannosidase II"/>
    <property type="match status" value="1"/>
</dbReference>
<dbReference type="Gene3D" id="2.60.40.10">
    <property type="entry name" value="Immunoglobulins"/>
    <property type="match status" value="1"/>
</dbReference>
<dbReference type="HAMAP" id="MF_01248">
    <property type="entry name" value="GlgX"/>
    <property type="match status" value="1"/>
</dbReference>
<dbReference type="InterPro" id="IPR040784">
    <property type="entry name" value="GlgX_C"/>
</dbReference>
<dbReference type="InterPro" id="IPR044505">
    <property type="entry name" value="GlgX_Isoamylase_N_E_set"/>
</dbReference>
<dbReference type="InterPro" id="IPR006047">
    <property type="entry name" value="Glyco_hydro_13_cat_dom"/>
</dbReference>
<dbReference type="InterPro" id="IPR004193">
    <property type="entry name" value="Glyco_hydro_13_N"/>
</dbReference>
<dbReference type="InterPro" id="IPR013780">
    <property type="entry name" value="Glyco_hydro_b"/>
</dbReference>
<dbReference type="InterPro" id="IPR022844">
    <property type="entry name" value="Glycogen_debranch_bac"/>
</dbReference>
<dbReference type="InterPro" id="IPR011837">
    <property type="entry name" value="Glycogen_debranch_GlgX"/>
</dbReference>
<dbReference type="InterPro" id="IPR017853">
    <property type="entry name" value="Glycoside_hydrolase_SF"/>
</dbReference>
<dbReference type="InterPro" id="IPR013783">
    <property type="entry name" value="Ig-like_fold"/>
</dbReference>
<dbReference type="InterPro" id="IPR014756">
    <property type="entry name" value="Ig_E-set"/>
</dbReference>
<dbReference type="NCBIfam" id="TIGR02100">
    <property type="entry name" value="glgX_debranch"/>
    <property type="match status" value="1"/>
</dbReference>
<dbReference type="NCBIfam" id="NF002983">
    <property type="entry name" value="PRK03705.1"/>
    <property type="match status" value="1"/>
</dbReference>
<dbReference type="PANTHER" id="PTHR43002">
    <property type="entry name" value="GLYCOGEN DEBRANCHING ENZYME"/>
    <property type="match status" value="1"/>
</dbReference>
<dbReference type="Pfam" id="PF00128">
    <property type="entry name" value="Alpha-amylase"/>
    <property type="match status" value="1"/>
</dbReference>
<dbReference type="Pfam" id="PF02922">
    <property type="entry name" value="CBM_48"/>
    <property type="match status" value="1"/>
</dbReference>
<dbReference type="Pfam" id="PF18390">
    <property type="entry name" value="GlgX_C"/>
    <property type="match status" value="1"/>
</dbReference>
<dbReference type="SMART" id="SM00642">
    <property type="entry name" value="Aamy"/>
    <property type="match status" value="1"/>
</dbReference>
<dbReference type="SUPFAM" id="SSF51445">
    <property type="entry name" value="(Trans)glycosidases"/>
    <property type="match status" value="1"/>
</dbReference>
<dbReference type="SUPFAM" id="SSF81296">
    <property type="entry name" value="E set domains"/>
    <property type="match status" value="1"/>
</dbReference>
<dbReference type="SUPFAM" id="SSF51011">
    <property type="entry name" value="Glycosyl hydrolase domain"/>
    <property type="match status" value="1"/>
</dbReference>
<organism>
    <name type="scientific">Serratia proteamaculans (strain 568)</name>
    <dbReference type="NCBI Taxonomy" id="399741"/>
    <lineage>
        <taxon>Bacteria</taxon>
        <taxon>Pseudomonadati</taxon>
        <taxon>Pseudomonadota</taxon>
        <taxon>Gammaproteobacteria</taxon>
        <taxon>Enterobacterales</taxon>
        <taxon>Yersiniaceae</taxon>
        <taxon>Serratia</taxon>
    </lineage>
</organism>
<protein>
    <recommendedName>
        <fullName evidence="1">Glycogen debranching enzyme</fullName>
        <ecNumber evidence="1">3.2.1.196</ecNumber>
    </recommendedName>
    <alternativeName>
        <fullName evidence="1">Limit dextrin alpha-1,6-maltotetraose-hydrolase</fullName>
    </alternativeName>
</protein>
<gene>
    <name evidence="1" type="primary">glgX</name>
    <name type="ordered locus">Spro_4646</name>
</gene>
<keyword id="KW-0119">Carbohydrate metabolism</keyword>
<keyword id="KW-0321">Glycogen metabolism</keyword>
<keyword id="KW-0326">Glycosidase</keyword>
<keyword id="KW-0378">Hydrolase</keyword>
<accession>A8GKU9</accession>
<reference key="1">
    <citation type="submission" date="2007-09" db="EMBL/GenBank/DDBJ databases">
        <title>Complete sequence of chromosome of Serratia proteamaculans 568.</title>
        <authorList>
            <consortium name="US DOE Joint Genome Institute"/>
            <person name="Copeland A."/>
            <person name="Lucas S."/>
            <person name="Lapidus A."/>
            <person name="Barry K."/>
            <person name="Glavina del Rio T."/>
            <person name="Dalin E."/>
            <person name="Tice H."/>
            <person name="Pitluck S."/>
            <person name="Chain P."/>
            <person name="Malfatti S."/>
            <person name="Shin M."/>
            <person name="Vergez L."/>
            <person name="Schmutz J."/>
            <person name="Larimer F."/>
            <person name="Land M."/>
            <person name="Hauser L."/>
            <person name="Kyrpides N."/>
            <person name="Kim E."/>
            <person name="Taghavi S."/>
            <person name="Newman L."/>
            <person name="Vangronsveld J."/>
            <person name="van der Lelie D."/>
            <person name="Richardson P."/>
        </authorList>
    </citation>
    <scope>NUCLEOTIDE SEQUENCE [LARGE SCALE GENOMIC DNA]</scope>
    <source>
        <strain>568</strain>
    </source>
</reference>
<evidence type="ECO:0000255" key="1">
    <source>
        <dbReference type="HAMAP-Rule" id="MF_01248"/>
    </source>
</evidence>
<evidence type="ECO:0000256" key="2">
    <source>
        <dbReference type="SAM" id="MobiDB-lite"/>
    </source>
</evidence>
<comment type="function">
    <text evidence="1">Removes maltotriose and maltotetraose chains that are attached by 1,6-alpha-linkage to the limit dextrin main chain, generating a debranched limit dextrin.</text>
</comment>
<comment type="catalytic activity">
    <reaction evidence="1">
        <text>Hydrolysis of (1-&gt;6)-alpha-D-glucosidic linkages to branches with degrees of polymerization of three or four glucose residues in limit dextrin.</text>
        <dbReference type="EC" id="3.2.1.196"/>
    </reaction>
</comment>
<comment type="pathway">
    <text evidence="1">Glycan degradation; glycogen degradation.</text>
</comment>
<comment type="similarity">
    <text evidence="1">Belongs to the glycosyl hydrolase 13 family.</text>
</comment>